<dbReference type="EC" id="3.5.1.41" evidence="5"/>
<dbReference type="EMBL" id="KY024221">
    <property type="protein sequence ID" value="APH81274.1"/>
    <property type="molecule type" value="Genomic_DNA"/>
</dbReference>
<dbReference type="SMR" id="A0A1L3THR9"/>
<dbReference type="BRENDA" id="3.5.1.41">
    <property type="organism ID" value="17105"/>
</dbReference>
<dbReference type="GO" id="GO:0005576">
    <property type="term" value="C:extracellular region"/>
    <property type="evidence" value="ECO:0000314"/>
    <property type="project" value="UniProtKB"/>
</dbReference>
<dbReference type="GO" id="GO:0008061">
    <property type="term" value="F:chitin binding"/>
    <property type="evidence" value="ECO:0007669"/>
    <property type="project" value="UniProtKB-KW"/>
</dbReference>
<dbReference type="GO" id="GO:0004099">
    <property type="term" value="F:chitin deacetylase activity"/>
    <property type="evidence" value="ECO:0000314"/>
    <property type="project" value="UniProtKB"/>
</dbReference>
<dbReference type="GO" id="GO:0046872">
    <property type="term" value="F:metal ion binding"/>
    <property type="evidence" value="ECO:0007669"/>
    <property type="project" value="UniProtKB-KW"/>
</dbReference>
<dbReference type="GO" id="GO:0071555">
    <property type="term" value="P:cell wall organization"/>
    <property type="evidence" value="ECO:0007669"/>
    <property type="project" value="UniProtKB-KW"/>
</dbReference>
<dbReference type="GO" id="GO:0006032">
    <property type="term" value="P:chitin catabolic process"/>
    <property type="evidence" value="ECO:0000314"/>
    <property type="project" value="UniProtKB"/>
</dbReference>
<dbReference type="GO" id="GO:0000272">
    <property type="term" value="P:polysaccharide catabolic process"/>
    <property type="evidence" value="ECO:0007669"/>
    <property type="project" value="UniProtKB-KW"/>
</dbReference>
<dbReference type="GO" id="GO:0042783">
    <property type="term" value="P:symbiont-mediated evasion of host immune response"/>
    <property type="evidence" value="ECO:0000314"/>
    <property type="project" value="UniProtKB"/>
</dbReference>
<dbReference type="CDD" id="cd10951">
    <property type="entry name" value="CE4_ClCDA_like"/>
    <property type="match status" value="1"/>
</dbReference>
<dbReference type="CDD" id="cd11618">
    <property type="entry name" value="ChtBD1_1"/>
    <property type="match status" value="1"/>
</dbReference>
<dbReference type="Gene3D" id="3.30.60.10">
    <property type="entry name" value="Endochitinase-like"/>
    <property type="match status" value="1"/>
</dbReference>
<dbReference type="Gene3D" id="3.20.20.370">
    <property type="entry name" value="Glycoside hydrolase/deacetylase"/>
    <property type="match status" value="1"/>
</dbReference>
<dbReference type="InterPro" id="IPR001002">
    <property type="entry name" value="Chitin-bd_1"/>
</dbReference>
<dbReference type="InterPro" id="IPR018371">
    <property type="entry name" value="Chitin-binding_1_CS"/>
</dbReference>
<dbReference type="InterPro" id="IPR036861">
    <property type="entry name" value="Endochitinase-like_sf"/>
</dbReference>
<dbReference type="InterPro" id="IPR011330">
    <property type="entry name" value="Glyco_hydro/deAcase_b/a-brl"/>
</dbReference>
<dbReference type="InterPro" id="IPR002509">
    <property type="entry name" value="NODB_dom"/>
</dbReference>
<dbReference type="PANTHER" id="PTHR46471">
    <property type="entry name" value="CHITIN DEACETYLASE"/>
    <property type="match status" value="1"/>
</dbReference>
<dbReference type="PANTHER" id="PTHR46471:SF2">
    <property type="entry name" value="CHITIN DEACETYLASE-RELATED"/>
    <property type="match status" value="1"/>
</dbReference>
<dbReference type="Pfam" id="PF00187">
    <property type="entry name" value="Chitin_bind_1"/>
    <property type="match status" value="1"/>
</dbReference>
<dbReference type="Pfam" id="PF01522">
    <property type="entry name" value="Polysacc_deac_1"/>
    <property type="match status" value="1"/>
</dbReference>
<dbReference type="SMART" id="SM00270">
    <property type="entry name" value="ChtBD1"/>
    <property type="match status" value="1"/>
</dbReference>
<dbReference type="SUPFAM" id="SSF88713">
    <property type="entry name" value="Glycoside hydrolase/deacetylase"/>
    <property type="match status" value="1"/>
</dbReference>
<dbReference type="SUPFAM" id="SSF57016">
    <property type="entry name" value="Plant lectins/antimicrobial peptides"/>
    <property type="match status" value="1"/>
</dbReference>
<dbReference type="PROSITE" id="PS00026">
    <property type="entry name" value="CHIT_BIND_I_1"/>
    <property type="match status" value="1"/>
</dbReference>
<dbReference type="PROSITE" id="PS50941">
    <property type="entry name" value="CHIT_BIND_I_2"/>
    <property type="match status" value="1"/>
</dbReference>
<dbReference type="PROSITE" id="PS51677">
    <property type="entry name" value="NODB"/>
    <property type="match status" value="1"/>
</dbReference>
<protein>
    <recommendedName>
        <fullName evidence="6">Chitin deacetylase</fullName>
        <ecNumber evidence="5">3.5.1.41</ecNumber>
    </recommendedName>
</protein>
<keyword id="KW-0119">Carbohydrate metabolism</keyword>
<keyword id="KW-0961">Cell wall biogenesis/degradation</keyword>
<keyword id="KW-0146">Chitin degradation</keyword>
<keyword id="KW-0147">Chitin-binding</keyword>
<keyword id="KW-0170">Cobalt</keyword>
<keyword id="KW-1015">Disulfide bond</keyword>
<keyword id="KW-0378">Hydrolase</keyword>
<keyword id="KW-0479">Metal-binding</keyword>
<keyword id="KW-0624">Polysaccharide degradation</keyword>
<keyword id="KW-0964">Secreted</keyword>
<keyword id="KW-0732">Signal</keyword>
<keyword id="KW-0843">Virulence</keyword>
<evidence type="ECO:0000250" key="1">
    <source>
        <dbReference type="UniProtKB" id="Q6DWK3"/>
    </source>
</evidence>
<evidence type="ECO:0000255" key="2"/>
<evidence type="ECO:0000255" key="3">
    <source>
        <dbReference type="PROSITE-ProRule" id="PRU00261"/>
    </source>
</evidence>
<evidence type="ECO:0000255" key="4">
    <source>
        <dbReference type="PROSITE-ProRule" id="PRU01014"/>
    </source>
</evidence>
<evidence type="ECO:0000269" key="5">
    <source>
    </source>
</evidence>
<evidence type="ECO:0000303" key="6">
    <source>
    </source>
</evidence>
<evidence type="ECO:0000305" key="7"/>
<evidence type="ECO:0000305" key="8">
    <source>
    </source>
</evidence>
<evidence type="ECO:0000312" key="9">
    <source>
        <dbReference type="EMBL" id="APH81274.1"/>
    </source>
</evidence>
<gene>
    <name evidence="6" type="primary">CDA</name>
</gene>
<organism evidence="9">
    <name type="scientific">Pestalotiopsis sp</name>
    <dbReference type="NCBI Taxonomy" id="36460"/>
    <lineage>
        <taxon>Eukaryota</taxon>
        <taxon>Fungi</taxon>
        <taxon>Dikarya</taxon>
        <taxon>Ascomycota</taxon>
        <taxon>Pezizomycotina</taxon>
        <taxon>Sordariomycetes</taxon>
        <taxon>Xylariomycetidae</taxon>
        <taxon>Amphisphaeriales</taxon>
        <taxon>Sporocadaceae</taxon>
        <taxon>Pestalotiopsis</taxon>
    </lineage>
</organism>
<proteinExistence type="evidence at protein level"/>
<feature type="signal peptide" evidence="2">
    <location>
        <begin position="1"/>
        <end position="16"/>
    </location>
</feature>
<feature type="chain" id="PRO_5012701795" description="Chitin deacetylase" evidence="2">
    <location>
        <begin position="17"/>
        <end position="298"/>
    </location>
</feature>
<feature type="domain" description="NodB homology" evidence="4">
    <location>
        <begin position="39"/>
        <end position="222"/>
    </location>
</feature>
<feature type="domain" description="Chitin-binding type-1" evidence="3">
    <location>
        <begin position="256"/>
        <end position="298"/>
    </location>
</feature>
<feature type="active site" description="Proton acceptor" evidence="4">
    <location>
        <position position="46"/>
    </location>
</feature>
<feature type="active site" description="Proton donor" evidence="4">
    <location>
        <position position="196"/>
    </location>
</feature>
<feature type="binding site" evidence="1">
    <location>
        <position position="46"/>
    </location>
    <ligand>
        <name>acetate</name>
        <dbReference type="ChEBI" id="CHEBI:30089"/>
    </ligand>
</feature>
<feature type="binding site" evidence="1">
    <location>
        <position position="47"/>
    </location>
    <ligand>
        <name>Co(2+)</name>
        <dbReference type="ChEBI" id="CHEBI:48828"/>
    </ligand>
</feature>
<feature type="binding site" evidence="1">
    <location>
        <position position="99"/>
    </location>
    <ligand>
        <name>Co(2+)</name>
        <dbReference type="ChEBI" id="CHEBI:48828"/>
    </ligand>
</feature>
<feature type="binding site" evidence="1">
    <location>
        <position position="103"/>
    </location>
    <ligand>
        <name>Co(2+)</name>
        <dbReference type="ChEBI" id="CHEBI:48828"/>
    </ligand>
</feature>
<feature type="binding site" evidence="1">
    <location>
        <position position="140"/>
    </location>
    <ligand>
        <name>acetate</name>
        <dbReference type="ChEBI" id="CHEBI:30089"/>
    </ligand>
</feature>
<feature type="disulfide bond" evidence="3">
    <location>
        <begin position="259"/>
        <end position="273"/>
    </location>
</feature>
<feature type="disulfide bond" evidence="3">
    <location>
        <begin position="267"/>
        <end position="279"/>
    </location>
</feature>
<feature type="disulfide bond" evidence="3">
    <location>
        <begin position="272"/>
        <end position="286"/>
    </location>
</feature>
<feature type="disulfide bond" evidence="3">
    <location>
        <begin position="290"/>
        <end position="297"/>
    </location>
</feature>
<name>CDA_PESTX</name>
<sequence length="298" mass="30941">MLAPLFAALLAGAATASPIQERQSSVPVGTIITACTVPNTFALTFDDGPFAYTSELLDLLSSNGVKATFFLNGQNWGSIYDYTSVVTRMDAEGHQIGSHTWSHADLATLDAAGITSQMTQLETALTSILGKVPTYMRPPYFSTNALALSTLGGLGYHVINANIDTLDYEHDDDTIGVAFTNFQNGLASGGTVSLMHDVHAQTVHVLVQEAINAIKAKGLTPVTVGTCLGDASANWYKSGGGSGTTPPPATGGPSPDDTCGGSNGYVCQNSQCCSQWGWCGTTSEYCAAGCQAAYGPCT</sequence>
<comment type="function">
    <text evidence="5">Hydrolyzes the N-acetamido groups of N-acetyl-D-glucosamine polymers in chitin to form chitosan and acetate (PubMed:27901067). May play a role in evasion of the host immune response; plant chitinases liberate chitin molecules from the fungal cell wall which act as elicitors of the plant immune response, deacetylation of the liberated chitin neutralizes elicitor activity (PubMed:27901067).</text>
</comment>
<comment type="catalytic activity">
    <reaction evidence="5">
        <text>[(1-&gt;4)-N-acetyl-beta-D-glucosaminyl](n) + n H2O = chitosan + n acetate</text>
        <dbReference type="Rhea" id="RHEA:10464"/>
        <dbReference type="Rhea" id="RHEA-COMP:9593"/>
        <dbReference type="Rhea" id="RHEA-COMP:9597"/>
        <dbReference type="ChEBI" id="CHEBI:15377"/>
        <dbReference type="ChEBI" id="CHEBI:17029"/>
        <dbReference type="ChEBI" id="CHEBI:30089"/>
        <dbReference type="ChEBI" id="CHEBI:57704"/>
        <dbReference type="EC" id="3.5.1.41"/>
    </reaction>
    <physiologicalReaction direction="left-to-right" evidence="8">
        <dbReference type="Rhea" id="RHEA:10465"/>
    </physiologicalReaction>
</comment>
<comment type="cofactor">
    <cofactor evidence="1">
        <name>Co(2+)</name>
        <dbReference type="ChEBI" id="CHEBI:48828"/>
    </cofactor>
</comment>
<comment type="activity regulation">
    <text evidence="5">Inhibited by Fe(2+) and to a lesser extent by Mn(2+).</text>
</comment>
<comment type="biophysicochemical properties">
    <phDependence>
        <text evidence="5">Optimum pH is 8.</text>
    </phDependence>
    <temperatureDependence>
        <text evidence="5">Optimum temperature is 55 degrees Celsius.</text>
    </temperatureDependence>
</comment>
<comment type="subcellular location">
    <subcellularLocation>
        <location evidence="5">Secreted</location>
    </subcellularLocation>
</comment>
<comment type="similarity">
    <text evidence="7">Belongs to the polysaccharide deacetylase family.</text>
</comment>
<accession>A0A1L3THR9</accession>
<reference evidence="9" key="1">
    <citation type="journal article" date="2016" name="Sci. Rep.">
        <title>A chitin deacetylase from the endophytic fungus Pestalotiopsis sp. efficiently inactivates the elicitor activity of chitin oligomers in rice cells.</title>
        <authorList>
            <person name="Cord-Landwehr S."/>
            <person name="Melcher R.L."/>
            <person name="Kolkenbrock S."/>
            <person name="Moerschbacher B.M."/>
        </authorList>
    </citation>
    <scope>NUCLEOTIDE SEQUENCE [GENOMIC DNA]</scope>
    <scope>FUNCTION</scope>
    <scope>CATALYTIC ACTIVITY</scope>
    <scope>ACTIVITY REGULATION</scope>
    <scope>BIOPHYSICOCHEMICAL PROPERTIES</scope>
    <scope>SUBCELLULAR LOCATION</scope>
    <source>
        <strain evidence="9">GR1</strain>
    </source>
</reference>